<organism>
    <name type="scientific">Homo sapiens</name>
    <name type="common">Human</name>
    <dbReference type="NCBI Taxonomy" id="9606"/>
    <lineage>
        <taxon>Eukaryota</taxon>
        <taxon>Metazoa</taxon>
        <taxon>Chordata</taxon>
        <taxon>Craniata</taxon>
        <taxon>Vertebrata</taxon>
        <taxon>Euteleostomi</taxon>
        <taxon>Mammalia</taxon>
        <taxon>Eutheria</taxon>
        <taxon>Euarchontoglires</taxon>
        <taxon>Primates</taxon>
        <taxon>Haplorrhini</taxon>
        <taxon>Catarrhini</taxon>
        <taxon>Hominidae</taxon>
        <taxon>Homo</taxon>
    </lineage>
</organism>
<name>TVAM1_HUMAN</name>
<sequence>MTSIRAVFIFLWLQLDLVNGENVEQHPSTLSVQEGDSAVIKCTYSDSASNYFPWYKQELGKGPQLIIDIRSNVGEKKDQRIAVTLNKTAKHFSLHITETQPEDSAVYFCAAS</sequence>
<comment type="function">
    <text evidence="3 5 6 7">V region of the variable domain of T cell receptor (TR) alpha chain that participates in the antigen recognition (PubMed:24600447). Alpha-beta T cell receptors are antigen specific receptors which are essential to the immune response and are present on the cell surface of T lymphocytes. Recognize peptide-major histocompatibility (MH) (pMH) complexes that are displayed by antigen presenting cells (APC), a prerequisite for efficient T cell adaptive immunity against pathogens (PubMed:25493333). Binding of alpha-beta TR to pMH complex initiates TR-CD3 clustering on the cell surface and intracellular activation of LCK that phosphorylates the ITAM motifs of CD3G, CD3D, CD3E and CD247 enabling the recruitment of ZAP70. In turn ZAP70 phosphorylates LAT, which recruits numerous signaling molecules to form the LAT signalosome. The LAT signalosome propagates signal branching to three major signaling pathways, the calcium, the mitogen-activated protein kinase (MAPK) kinase and the nuclear factor NF-kappa-B (NF-kB) pathways, leading to the mobilization of transcription factors that are critical for gene expression and essential for T cell growth and differentiation (PubMed:23524462). The T cell repertoire is generated in the thymus, by V-(D)-J rearrangement. This repertoire is then shaped by intrathymic selection events to generate a peripheral T cell pool of self-MH restricted, non-autoaggressive T cells. Post-thymic interaction of alpha-beta TR with the pMH complexes shapes TR structural and functional avidity (PubMed:15040585).</text>
</comment>
<comment type="subunit">
    <text evidence="4">Alpha-beta TR is a heterodimer composed of an alpha and beta chain; disulfide-linked. The alpha-beta TR is associated with the transmembrane signaling CD3 coreceptor proteins to form the TR-CD3 (TcR or TCR). The assembly of alpha-beta TR heterodimers with CD3 occurs in the endoplasmic reticulum where a single alpha-beta TR heterodimer associates with one CD3D-CD3E heterodimer, one CD3G-CD3E heterodimer and one CD247 homodimer forming a stable octameric structure. CD3D-CD3E and CD3G-CD3E heterodimers preferentially associate with TR alpha and TR beta chains, respectively. The association of the CD247 homodimer is the last step of TcR assembly in the endoplasmic reticulum and is required for transport to the cell surface.</text>
</comment>
<comment type="subcellular location">
    <subcellularLocation>
        <location evidence="4">Cell membrane</location>
    </subcellularLocation>
</comment>
<comment type="polymorphism">
    <text evidence="9">There are several alleles. The sequence shown is that of IMGT allele TRAV13-1*01.</text>
</comment>
<evidence type="ECO:0000255" key="1"/>
<evidence type="ECO:0000255" key="2">
    <source>
        <dbReference type="PROSITE-ProRule" id="PRU00114"/>
    </source>
</evidence>
<evidence type="ECO:0000303" key="3">
    <source>
    </source>
</evidence>
<evidence type="ECO:0000303" key="4">
    <source>
    </source>
</evidence>
<evidence type="ECO:0000303" key="5">
    <source>
    </source>
</evidence>
<evidence type="ECO:0000303" key="6">
    <source>
    </source>
</evidence>
<evidence type="ECO:0000303" key="7">
    <source>
    </source>
</evidence>
<evidence type="ECO:0000303" key="8">
    <source ref="2"/>
</evidence>
<evidence type="ECO:0000305" key="9"/>
<protein>
    <recommendedName>
        <fullName evidence="8">T cell receptor alpha variable 13-1</fullName>
    </recommendedName>
</protein>
<dbReference type="EMBL" id="AC243980">
    <property type="status" value="NOT_ANNOTATED_CDS"/>
    <property type="molecule type" value="Genomic_DNA"/>
</dbReference>
<dbReference type="SMR" id="A0A0B4J241"/>
<dbReference type="FunCoup" id="A0A0B4J241">
    <property type="interactions" value="345"/>
</dbReference>
<dbReference type="IMGT_GENE-DB" id="TRAV13-1"/>
<dbReference type="GlyCosmos" id="A0A0B4J241">
    <property type="glycosylation" value="1 site, No reported glycans"/>
</dbReference>
<dbReference type="GlyGen" id="A0A0B4J241">
    <property type="glycosylation" value="1 site"/>
</dbReference>
<dbReference type="BioMuta" id="TRAV13-1"/>
<dbReference type="MassIVE" id="A0A0B4J241"/>
<dbReference type="Ensembl" id="ENST00000390436.2">
    <property type="protein sequence ID" value="ENSP00000441696.1"/>
    <property type="gene ID" value="ENSG00000211788.2"/>
</dbReference>
<dbReference type="AGR" id="HGNC:12108"/>
<dbReference type="GeneCards" id="TRAV13-1"/>
<dbReference type="HGNC" id="HGNC:12108">
    <property type="gene designation" value="TRAV13-1"/>
</dbReference>
<dbReference type="HPA" id="ENSG00000211788">
    <property type="expression patterns" value="Tissue enriched (lymphoid)"/>
</dbReference>
<dbReference type="neXtProt" id="NX_A0A0B4J241"/>
<dbReference type="OpenTargets" id="ENSG00000211788"/>
<dbReference type="VEuPathDB" id="HostDB:ENSG00000211788"/>
<dbReference type="GeneTree" id="ENSGT00940000159469"/>
<dbReference type="HOGENOM" id="CLU_077975_8_3_1"/>
<dbReference type="InParanoid" id="A0A0B4J241"/>
<dbReference type="OMA" id="AVIKCTY"/>
<dbReference type="OrthoDB" id="8947657at2759"/>
<dbReference type="PAN-GO" id="A0A0B4J241">
    <property type="GO annotations" value="1 GO annotation based on evolutionary models"/>
</dbReference>
<dbReference type="PhylomeDB" id="A0A0B4J241"/>
<dbReference type="SignaLink" id="A0A0B4J241"/>
<dbReference type="ChiTaRS" id="TRAV13-1">
    <property type="organism name" value="human"/>
</dbReference>
<dbReference type="Pharos" id="A0A0B4J241">
    <property type="development level" value="Tdark"/>
</dbReference>
<dbReference type="PRO" id="PR:A0A0B4J241"/>
<dbReference type="Proteomes" id="UP000005640">
    <property type="component" value="Chromosome 14"/>
</dbReference>
<dbReference type="RNAct" id="A0A0B4J241">
    <property type="molecule type" value="protein"/>
</dbReference>
<dbReference type="Bgee" id="ENSG00000211788">
    <property type="expression patterns" value="Expressed in granulocyte and 103 other cell types or tissues"/>
</dbReference>
<dbReference type="GO" id="GO:0042101">
    <property type="term" value="C:T cell receptor complex"/>
    <property type="evidence" value="ECO:0007669"/>
    <property type="project" value="UniProtKB-KW"/>
</dbReference>
<dbReference type="GO" id="GO:0002250">
    <property type="term" value="P:adaptive immune response"/>
    <property type="evidence" value="ECO:0007669"/>
    <property type="project" value="UniProtKB-KW"/>
</dbReference>
<dbReference type="GO" id="GO:0009617">
    <property type="term" value="P:response to bacterium"/>
    <property type="evidence" value="ECO:0000318"/>
    <property type="project" value="GO_Central"/>
</dbReference>
<dbReference type="CDD" id="cd04983">
    <property type="entry name" value="IgV_TCR_alpha"/>
    <property type="match status" value="1"/>
</dbReference>
<dbReference type="Gene3D" id="2.60.40.10">
    <property type="entry name" value="Immunoglobulins"/>
    <property type="match status" value="1"/>
</dbReference>
<dbReference type="InterPro" id="IPR007110">
    <property type="entry name" value="Ig-like_dom"/>
</dbReference>
<dbReference type="InterPro" id="IPR036179">
    <property type="entry name" value="Ig-like_dom_sf"/>
</dbReference>
<dbReference type="InterPro" id="IPR013783">
    <property type="entry name" value="Ig-like_fold"/>
</dbReference>
<dbReference type="InterPro" id="IPR003599">
    <property type="entry name" value="Ig_sub"/>
</dbReference>
<dbReference type="InterPro" id="IPR013106">
    <property type="entry name" value="Ig_V-set"/>
</dbReference>
<dbReference type="InterPro" id="IPR051006">
    <property type="entry name" value="TCR_variable_domain"/>
</dbReference>
<dbReference type="PANTHER" id="PTHR19343:SF14">
    <property type="entry name" value="IG-LIKE DOMAIN-CONTAINING PROTEIN-RELATED"/>
    <property type="match status" value="1"/>
</dbReference>
<dbReference type="PANTHER" id="PTHR19343">
    <property type="entry name" value="T CELL RECEPTOR ALPHA VARIABLE 1-2"/>
    <property type="match status" value="1"/>
</dbReference>
<dbReference type="Pfam" id="PF07686">
    <property type="entry name" value="V-set"/>
    <property type="match status" value="1"/>
</dbReference>
<dbReference type="SMART" id="SM00409">
    <property type="entry name" value="IG"/>
    <property type="match status" value="1"/>
</dbReference>
<dbReference type="SMART" id="SM00406">
    <property type="entry name" value="IGv"/>
    <property type="match status" value="1"/>
</dbReference>
<dbReference type="SUPFAM" id="SSF48726">
    <property type="entry name" value="Immunoglobulin"/>
    <property type="match status" value="1"/>
</dbReference>
<dbReference type="PROSITE" id="PS50835">
    <property type="entry name" value="IG_LIKE"/>
    <property type="match status" value="1"/>
</dbReference>
<feature type="signal peptide" evidence="1">
    <location>
        <begin position="1"/>
        <end position="20"/>
    </location>
</feature>
<feature type="chain" id="PRO_0000443267" description="T cell receptor alpha variable 13-1" evidence="1">
    <location>
        <begin position="21"/>
        <end position="112"/>
    </location>
</feature>
<feature type="domain" description="Ig-like" evidence="2">
    <location>
        <begin position="21"/>
        <end position="112" status="greater than"/>
    </location>
</feature>
<feature type="glycosylation site" description="N-linked (GlcNAc...) asparagine" evidence="1">
    <location>
        <position position="86"/>
    </location>
</feature>
<feature type="disulfide bond" evidence="2">
    <location>
        <begin position="42"/>
        <end position="109"/>
    </location>
</feature>
<feature type="non-terminal residue">
    <location>
        <position position="112"/>
    </location>
</feature>
<keyword id="KW-1064">Adaptive immunity</keyword>
<keyword id="KW-1003">Cell membrane</keyword>
<keyword id="KW-1015">Disulfide bond</keyword>
<keyword id="KW-0325">Glycoprotein</keyword>
<keyword id="KW-0391">Immunity</keyword>
<keyword id="KW-0393">Immunoglobulin domain</keyword>
<keyword id="KW-0472">Membrane</keyword>
<keyword id="KW-1267">Proteomics identification</keyword>
<keyword id="KW-0675">Receptor</keyword>
<keyword id="KW-1185">Reference proteome</keyword>
<keyword id="KW-0732">Signal</keyword>
<keyword id="KW-1279">T cell receptor</keyword>
<gene>
    <name evidence="8" type="primary">TRAV13-1</name>
</gene>
<accession>A0A0B4J241</accession>
<reference key="1">
    <citation type="journal article" date="2003" name="Nature">
        <title>The DNA sequence and analysis of human chromosome 14.</title>
        <authorList>
            <person name="Heilig R."/>
            <person name="Eckenberg R."/>
            <person name="Petit J.-L."/>
            <person name="Fonknechten N."/>
            <person name="Da Silva C."/>
            <person name="Cattolico L."/>
            <person name="Levy M."/>
            <person name="Barbe V."/>
            <person name="De Berardinis V."/>
            <person name="Ureta-Vidal A."/>
            <person name="Pelletier E."/>
            <person name="Vico V."/>
            <person name="Anthouard V."/>
            <person name="Rowen L."/>
            <person name="Madan A."/>
            <person name="Qin S."/>
            <person name="Sun H."/>
            <person name="Du H."/>
            <person name="Pepin K."/>
            <person name="Artiguenave F."/>
            <person name="Robert C."/>
            <person name="Cruaud C."/>
            <person name="Bruels T."/>
            <person name="Jaillon O."/>
            <person name="Friedlander L."/>
            <person name="Samson G."/>
            <person name="Brottier P."/>
            <person name="Cure S."/>
            <person name="Segurens B."/>
            <person name="Aniere F."/>
            <person name="Samain S."/>
            <person name="Crespeau H."/>
            <person name="Abbasi N."/>
            <person name="Aiach N."/>
            <person name="Boscus D."/>
            <person name="Dickhoff R."/>
            <person name="Dors M."/>
            <person name="Dubois I."/>
            <person name="Friedman C."/>
            <person name="Gouyvenoux M."/>
            <person name="James R."/>
            <person name="Madan A."/>
            <person name="Mairey-Estrada B."/>
            <person name="Mangenot S."/>
            <person name="Martins N."/>
            <person name="Menard M."/>
            <person name="Oztas S."/>
            <person name="Ratcliffe A."/>
            <person name="Shaffer T."/>
            <person name="Trask B."/>
            <person name="Vacherie B."/>
            <person name="Bellemere C."/>
            <person name="Belser C."/>
            <person name="Besnard-Gonnet M."/>
            <person name="Bartol-Mavel D."/>
            <person name="Boutard M."/>
            <person name="Briez-Silla S."/>
            <person name="Combette S."/>
            <person name="Dufosse-Laurent V."/>
            <person name="Ferron C."/>
            <person name="Lechaplais C."/>
            <person name="Louesse C."/>
            <person name="Muselet D."/>
            <person name="Magdelenat G."/>
            <person name="Pateau E."/>
            <person name="Petit E."/>
            <person name="Sirvain-Trukniewicz P."/>
            <person name="Trybou A."/>
            <person name="Vega-Czarny N."/>
            <person name="Bataille E."/>
            <person name="Bluet E."/>
            <person name="Bordelais I."/>
            <person name="Dubois M."/>
            <person name="Dumont C."/>
            <person name="Guerin T."/>
            <person name="Haffray S."/>
            <person name="Hammadi R."/>
            <person name="Muanga J."/>
            <person name="Pellouin V."/>
            <person name="Robert D."/>
            <person name="Wunderle E."/>
            <person name="Gauguet G."/>
            <person name="Roy A."/>
            <person name="Sainte-Marthe L."/>
            <person name="Verdier J."/>
            <person name="Verdier-Discala C."/>
            <person name="Hillier L.W."/>
            <person name="Fulton L."/>
            <person name="McPherson J."/>
            <person name="Matsuda F."/>
            <person name="Wilson R."/>
            <person name="Scarpelli C."/>
            <person name="Gyapay G."/>
            <person name="Wincker P."/>
            <person name="Saurin W."/>
            <person name="Quetier F."/>
            <person name="Waterston R."/>
            <person name="Hood L."/>
            <person name="Weissenbach J."/>
        </authorList>
    </citation>
    <scope>NUCLEOTIDE SEQUENCE [LARGE SCALE GENOMIC DNA] (IMGT ALLELE TRAV13-1*01)</scope>
</reference>
<reference key="2">
    <citation type="book" date="2001" name="The T Cell Receptor FactsBook.">
        <title>The T Cell Receptor FactsBook.</title>
        <editorList>
            <person name="Lefranc M.P."/>
            <person name="Lefranc G."/>
        </editorList>
        <authorList>
            <person name="Lefranc M.P."/>
            <person name="Lefranc G."/>
        </authorList>
    </citation>
    <scope>NOMENCLATURE</scope>
</reference>
<reference key="3">
    <citation type="journal article" date="2004" name="Nat. Rev. Immunol.">
        <title>The many important facets of T-cell repertoire diversity.</title>
        <authorList>
            <person name="Nikolich-Zugich J."/>
            <person name="Slifka M.K."/>
            <person name="Messaoudi I."/>
        </authorList>
    </citation>
    <scope>REVIEW ON T CELL REPERTOIRE DIVERSITY</scope>
</reference>
<reference key="4">
    <citation type="journal article" date="2010" name="Cold Spring Harb. Perspect. Biol.">
        <title>Structural biology of the T-cell receptor: insights into receptor assembly, ligand recognition, and initiation of signaling.</title>
        <authorList>
            <person name="Wucherpfennig K.W."/>
            <person name="Gagnon E."/>
            <person name="Call M.J."/>
            <person name="Huseby E.S."/>
            <person name="Call M.E."/>
        </authorList>
    </citation>
    <scope>REVIEW ON T CELL RECEPTOR-CD3 COMPLEX ASSEMBLY</scope>
    <scope>SUBCELLULAR LOCATION</scope>
</reference>
<reference key="5">
    <citation type="journal article" date="2013" name="Nat. Rev. Immunol.">
        <title>T cell receptor signalling networks: branched, diversified and bounded.</title>
        <authorList>
            <person name="Brownlie R.J."/>
            <person name="Zamoyska R."/>
        </authorList>
    </citation>
    <scope>REVIEW ON T CELL RECEPTOR SIGNALING</scope>
</reference>
<reference key="6">
    <citation type="journal article" date="2014" name="Front. Immunol.">
        <title>Immunoglobulin and T Cell Receptor Genes: IMGT((R)) and the Birth and Rise of Immunoinformatics.</title>
        <authorList>
            <person name="Lefranc M.P."/>
        </authorList>
    </citation>
    <scope>NOMENCLATURE</scope>
</reference>
<reference key="7">
    <citation type="journal article" date="2015" name="Annu. Rev. Immunol.">
        <title>T cell antigen receptor recognition of antigen-presenting molecules.</title>
        <authorList>
            <person name="Rossjohn J."/>
            <person name="Gras S."/>
            <person name="Miles J.J."/>
            <person name="Turner S.J."/>
            <person name="Godfrey D.I."/>
            <person name="McCluskey J."/>
        </authorList>
    </citation>
    <scope>REVIEW ON FUNCTION</scope>
</reference>
<proteinExistence type="evidence at protein level"/>